<protein>
    <recommendedName>
        <fullName>General odorant-binding protein 70</fullName>
    </recommendedName>
</protein>
<evidence type="ECO:0000250" key="1"/>
<evidence type="ECO:0000255" key="2"/>
<evidence type="ECO:0000305" key="3"/>
<comment type="function">
    <text evidence="1">Present in the aqueous fluid surrounding olfactory sensory dendrites and are thought to aid in the capture and transport of hydrophobic odorants into and through this fluid.</text>
</comment>
<comment type="subcellular location">
    <subcellularLocation>
        <location evidence="1">Secreted</location>
    </subcellularLocation>
</comment>
<comment type="similarity">
    <text evidence="3">Belongs to the PBP/GOBP family.</text>
</comment>
<reference key="1">
    <citation type="journal article" date="2002" name="Science">
        <title>The genome sequence of the malaria mosquito Anopheles gambiae.</title>
        <authorList>
            <person name="Holt R.A."/>
            <person name="Subramanian G.M."/>
            <person name="Halpern A."/>
            <person name="Sutton G.G."/>
            <person name="Charlab R."/>
            <person name="Nusskern D.R."/>
            <person name="Wincker P."/>
            <person name="Clark A.G."/>
            <person name="Ribeiro J.M.C."/>
            <person name="Wides R."/>
            <person name="Salzberg S.L."/>
            <person name="Loftus B.J."/>
            <person name="Yandell M.D."/>
            <person name="Majoros W.H."/>
            <person name="Rusch D.B."/>
            <person name="Lai Z."/>
            <person name="Kraft C.L."/>
            <person name="Abril J.F."/>
            <person name="Anthouard V."/>
            <person name="Arensburger P."/>
            <person name="Atkinson P.W."/>
            <person name="Baden H."/>
            <person name="de Berardinis V."/>
            <person name="Baldwin D."/>
            <person name="Benes V."/>
            <person name="Biedler J."/>
            <person name="Blass C."/>
            <person name="Bolanos R."/>
            <person name="Boscus D."/>
            <person name="Barnstead M."/>
            <person name="Cai S."/>
            <person name="Center A."/>
            <person name="Chaturverdi K."/>
            <person name="Christophides G.K."/>
            <person name="Chrystal M.A.M."/>
            <person name="Clamp M."/>
            <person name="Cravchik A."/>
            <person name="Curwen V."/>
            <person name="Dana A."/>
            <person name="Delcher A."/>
            <person name="Dew I."/>
            <person name="Evans C.A."/>
            <person name="Flanigan M."/>
            <person name="Grundschober-Freimoser A."/>
            <person name="Friedli L."/>
            <person name="Gu Z."/>
            <person name="Guan P."/>
            <person name="Guigo R."/>
            <person name="Hillenmeyer M.E."/>
            <person name="Hladun S.L."/>
            <person name="Hogan J.R."/>
            <person name="Hong Y.S."/>
            <person name="Hoover J."/>
            <person name="Jaillon O."/>
            <person name="Ke Z."/>
            <person name="Kodira C.D."/>
            <person name="Kokoza E."/>
            <person name="Koutsos A."/>
            <person name="Letunic I."/>
            <person name="Levitsky A.A."/>
            <person name="Liang Y."/>
            <person name="Lin J.-J."/>
            <person name="Lobo N.F."/>
            <person name="Lopez J.R."/>
            <person name="Malek J.A."/>
            <person name="McIntosh T.C."/>
            <person name="Meister S."/>
            <person name="Miller J.R."/>
            <person name="Mobarry C."/>
            <person name="Mongin E."/>
            <person name="Murphy S.D."/>
            <person name="O'Brochta D.A."/>
            <person name="Pfannkoch C."/>
            <person name="Qi R."/>
            <person name="Regier M.A."/>
            <person name="Remington K."/>
            <person name="Shao H."/>
            <person name="Sharakhova M.V."/>
            <person name="Sitter C.D."/>
            <person name="Shetty J."/>
            <person name="Smith T.J."/>
            <person name="Strong R."/>
            <person name="Sun J."/>
            <person name="Thomasova D."/>
            <person name="Ton L.Q."/>
            <person name="Topalis P."/>
            <person name="Tu Z.J."/>
            <person name="Unger M.F."/>
            <person name="Walenz B."/>
            <person name="Wang A.H."/>
            <person name="Wang J."/>
            <person name="Wang M."/>
            <person name="Wang X."/>
            <person name="Woodford K.J."/>
            <person name="Wortman J.R."/>
            <person name="Wu M."/>
            <person name="Yao A."/>
            <person name="Zdobnov E.M."/>
            <person name="Zhang H."/>
            <person name="Zhao Q."/>
            <person name="Zhao S."/>
            <person name="Zhu S.C."/>
            <person name="Zhimulev I."/>
            <person name="Coluzzi M."/>
            <person name="della Torre A."/>
            <person name="Roth C.W."/>
            <person name="Louis C."/>
            <person name="Kalush F."/>
            <person name="Mural R.J."/>
            <person name="Myers E.W."/>
            <person name="Adams M.D."/>
            <person name="Smith H.O."/>
            <person name="Broder S."/>
            <person name="Gardner M.J."/>
            <person name="Fraser C.M."/>
            <person name="Birney E."/>
            <person name="Bork P."/>
            <person name="Brey P.T."/>
            <person name="Venter J.C."/>
            <person name="Weissenbach J."/>
            <person name="Kafatos F.C."/>
            <person name="Collins F.H."/>
            <person name="Hoffman S.L."/>
        </authorList>
    </citation>
    <scope>NUCLEOTIDE SEQUENCE [LARGE SCALE GENOMIC DNA]</scope>
    <source>
        <strain>PEST</strain>
    </source>
</reference>
<reference key="2">
    <citation type="journal article" date="2013" name="Genome Biol. Evol.">
        <title>Comparative genomics of odorant binding proteins in Anopheles gambiae, Aedes aegypti, and Culex quinquefasciatus.</title>
        <authorList>
            <person name="Manoharan M."/>
            <person name="Ng Fuk Chong M."/>
            <person name="Vaitinadapoule A."/>
            <person name="Frumence E."/>
            <person name="Sowdhamini R."/>
            <person name="Offmann B."/>
        </authorList>
    </citation>
    <scope>IDENTIFICATION</scope>
</reference>
<dbReference type="EMBL" id="AAAB01008960">
    <property type="protein sequence ID" value="EAA11535.2"/>
    <property type="molecule type" value="Genomic_DNA"/>
</dbReference>
<dbReference type="FunCoup" id="Q7Q5L4">
    <property type="interactions" value="39"/>
</dbReference>
<dbReference type="STRING" id="7165.Q7Q5L4"/>
<dbReference type="PaxDb" id="7165-AGAP006368-PA"/>
<dbReference type="EnsemblMetazoa" id="AGAP006368-RA">
    <property type="protein sequence ID" value="AGAP006368-PA"/>
    <property type="gene ID" value="AGAP006368"/>
</dbReference>
<dbReference type="GeneID" id="1276977"/>
<dbReference type="KEGG" id="aga:1276977"/>
<dbReference type="CTD" id="2768955"/>
<dbReference type="VEuPathDB" id="VectorBase:AGAMI1_001793"/>
<dbReference type="VEuPathDB" id="VectorBase:AGAP006368"/>
<dbReference type="eggNOG" id="ENOG502S1QU">
    <property type="taxonomic scope" value="Eukaryota"/>
</dbReference>
<dbReference type="HOGENOM" id="CLU_1512104_0_0_1"/>
<dbReference type="InParanoid" id="Q7Q5L4"/>
<dbReference type="OMA" id="LHCVYAR"/>
<dbReference type="PhylomeDB" id="Q7Q5L4"/>
<dbReference type="Proteomes" id="UP000007062">
    <property type="component" value="Chromosome 2L"/>
</dbReference>
<dbReference type="GO" id="GO:0005576">
    <property type="term" value="C:extracellular region"/>
    <property type="evidence" value="ECO:0007669"/>
    <property type="project" value="UniProtKB-SubCell"/>
</dbReference>
<dbReference type="GO" id="GO:0005549">
    <property type="term" value="F:odorant binding"/>
    <property type="evidence" value="ECO:0007669"/>
    <property type="project" value="InterPro"/>
</dbReference>
<dbReference type="GO" id="GO:0007608">
    <property type="term" value="P:sensory perception of smell"/>
    <property type="evidence" value="ECO:0007669"/>
    <property type="project" value="UniProtKB-KW"/>
</dbReference>
<dbReference type="Gene3D" id="1.10.238.20">
    <property type="entry name" value="Pheromone/general odorant binding protein domain"/>
    <property type="match status" value="1"/>
</dbReference>
<dbReference type="InterPro" id="IPR052295">
    <property type="entry name" value="Odorant-binding_protein"/>
</dbReference>
<dbReference type="InterPro" id="IPR006170">
    <property type="entry name" value="PBP/GOBP"/>
</dbReference>
<dbReference type="InterPro" id="IPR036728">
    <property type="entry name" value="PBP_GOBP_sf"/>
</dbReference>
<dbReference type="PANTHER" id="PTHR21066">
    <property type="entry name" value="ODORANT-BINDING PROTEIN 59A-RELATED"/>
    <property type="match status" value="1"/>
</dbReference>
<dbReference type="PANTHER" id="PTHR21066:SF18">
    <property type="entry name" value="ODORANT-BINDING PROTEIN 73A, ISOFORM B"/>
    <property type="match status" value="1"/>
</dbReference>
<dbReference type="Pfam" id="PF01395">
    <property type="entry name" value="PBP_GOBP"/>
    <property type="match status" value="1"/>
</dbReference>
<dbReference type="SUPFAM" id="SSF47565">
    <property type="entry name" value="Insect pheromone/odorant-binding proteins"/>
    <property type="match status" value="1"/>
</dbReference>
<sequence length="200" mass="22673">MRRQYSMWASTVAVIACGSALMLLHPVGADAPKKRCLTKPNVSKKVDMVIHQCQEEIKSSLIEDALKIFTAEHGQWHDRRKRDEGGLDFSHPTIVSHEDKWIAGCLMQCVYRKNNAIDKNGWPTLDGLVSLYTDGVNEQGYFMATLRGVDRCLKGTSKKYQIKRNDAAENFEQCEVAFDVFDCISDMITDYCSGQMEDDH</sequence>
<keyword id="KW-1015">Disulfide bond</keyword>
<keyword id="KW-0552">Olfaction</keyword>
<keyword id="KW-1185">Reference proteome</keyword>
<keyword id="KW-0964">Secreted</keyword>
<keyword id="KW-0716">Sensory transduction</keyword>
<keyword id="KW-0732">Signal</keyword>
<keyword id="KW-0813">Transport</keyword>
<feature type="signal peptide" evidence="2">
    <location>
        <begin position="1"/>
        <end position="29"/>
    </location>
</feature>
<feature type="chain" id="PRO_0000430410" description="General odorant-binding protein 70">
    <location>
        <begin position="30"/>
        <end position="200"/>
    </location>
</feature>
<feature type="disulfide bond" evidence="1">
    <location>
        <begin position="105"/>
        <end position="174"/>
    </location>
</feature>
<feature type="disulfide bond" evidence="1">
    <location>
        <begin position="152"/>
        <end position="183"/>
    </location>
</feature>
<accession>Q7Q5L4</accession>
<organism>
    <name type="scientific">Anopheles gambiae</name>
    <name type="common">African malaria mosquito</name>
    <dbReference type="NCBI Taxonomy" id="7165"/>
    <lineage>
        <taxon>Eukaryota</taxon>
        <taxon>Metazoa</taxon>
        <taxon>Ecdysozoa</taxon>
        <taxon>Arthropoda</taxon>
        <taxon>Hexapoda</taxon>
        <taxon>Insecta</taxon>
        <taxon>Pterygota</taxon>
        <taxon>Neoptera</taxon>
        <taxon>Endopterygota</taxon>
        <taxon>Diptera</taxon>
        <taxon>Nematocera</taxon>
        <taxon>Culicoidea</taxon>
        <taxon>Culicidae</taxon>
        <taxon>Anophelinae</taxon>
        <taxon>Anopheles</taxon>
    </lineage>
</organism>
<gene>
    <name type="primary">Obp70</name>
    <name type="ORF">AGAP006368</name>
</gene>
<name>OBP70_ANOGA</name>
<proteinExistence type="inferred from homology"/>